<accession>Q5J3L6</accession>
<accession>Q62852</accession>
<proteinExistence type="evidence at transcript level"/>
<protein>
    <recommendedName>
        <fullName>Vomeronasal type-1 receptor 100</fullName>
    </recommendedName>
    <alternativeName>
        <fullName>Pheromone receptor VN3</fullName>
    </alternativeName>
    <alternativeName>
        <fullName>Vomeronasal receptor 3</fullName>
    </alternativeName>
    <alternativeName>
        <fullName>Vomeronasal type-1 receptor A12</fullName>
    </alternativeName>
</protein>
<sequence>MSEFPFFSPQPLFSYMMNKNSRVHTDSNIRNTFFTEIGIGILANSFLLLFHIFKFIRGQRSRLTDLPIGLLSLIHLLMLLMGAFIAIDIFISWRGWDDIICKFLVYLYRSFRGLSLCTTCMLSVLQAITLSPRSSCLAKFKHKSPHHVSCAIISLSILYMFISSHLLVSINATPNLTTNNFMQVTQSCYIIPLSYLMQSMFSTLLAIRDISLISLMVLSTCYMVVLLCRHRNQIQHLQGTNLSPKASPEQRATQTILMLMTFFVLMSIFDSIVSCSRTMYLNDPTSYYIQIFVVYIYATVSPFVFMSTEKHIVNFLKSMCVRVKNV</sequence>
<comment type="function">
    <text evidence="1 4">Putative pheromone receptor implicated in the regulation of social as well as reproductive behavior.</text>
</comment>
<comment type="subcellular location">
    <subcellularLocation>
        <location evidence="5">Cell membrane</location>
        <topology evidence="2">Multi-pass membrane protein</topology>
    </subcellularLocation>
</comment>
<comment type="tissue specificity">
    <text evidence="4">Expressed in 1-4% of neurons of the vomeronasal organ. Only one pheromone receptor gene may be expressed in a particular neuron. Not expressed in the main olfactory epithelium.</text>
</comment>
<comment type="similarity">
    <text evidence="3">Belongs to the G-protein coupled receptor 1 family.</text>
</comment>
<gene>
    <name type="primary">Vom1r100</name>
    <name type="synonym">V1ra12</name>
    <name type="synonym">Vnr3</name>
</gene>
<feature type="chain" id="PRO_0000239968" description="Vomeronasal type-1 receptor 100">
    <location>
        <begin position="1"/>
        <end position="326"/>
    </location>
</feature>
<feature type="topological domain" description="Extracellular" evidence="2">
    <location>
        <begin position="1"/>
        <end position="32"/>
    </location>
</feature>
<feature type="transmembrane region" description="Helical; Name=1" evidence="2">
    <location>
        <begin position="33"/>
        <end position="53"/>
    </location>
</feature>
<feature type="topological domain" description="Cytoplasmic" evidence="2">
    <location>
        <begin position="54"/>
        <end position="70"/>
    </location>
</feature>
<feature type="transmembrane region" description="Helical; Name=2" evidence="2">
    <location>
        <begin position="71"/>
        <end position="91"/>
    </location>
</feature>
<feature type="topological domain" description="Extracellular" evidence="2">
    <location>
        <begin position="92"/>
        <end position="104"/>
    </location>
</feature>
<feature type="transmembrane region" description="Helical; Name=3" evidence="2">
    <location>
        <begin position="105"/>
        <end position="127"/>
    </location>
</feature>
<feature type="topological domain" description="Cytoplasmic" evidence="2">
    <location>
        <begin position="128"/>
        <end position="149"/>
    </location>
</feature>
<feature type="transmembrane region" description="Helical; Name=4" evidence="2">
    <location>
        <begin position="150"/>
        <end position="170"/>
    </location>
</feature>
<feature type="topological domain" description="Extracellular" evidence="2">
    <location>
        <begin position="171"/>
        <end position="209"/>
    </location>
</feature>
<feature type="transmembrane region" description="Helical; Name=5" evidence="2">
    <location>
        <begin position="210"/>
        <end position="230"/>
    </location>
</feature>
<feature type="topological domain" description="Cytoplasmic" evidence="2">
    <location>
        <begin position="231"/>
        <end position="254"/>
    </location>
</feature>
<feature type="transmembrane region" description="Helical; Name=6" evidence="2">
    <location>
        <begin position="255"/>
        <end position="275"/>
    </location>
</feature>
<feature type="topological domain" description="Extracellular" evidence="2">
    <location>
        <begin position="276"/>
        <end position="285"/>
    </location>
</feature>
<feature type="transmembrane region" description="Helical; Name=7" evidence="2">
    <location>
        <begin position="286"/>
        <end position="306"/>
    </location>
</feature>
<feature type="topological domain" description="Cytoplasmic" evidence="2">
    <location>
        <begin position="307"/>
        <end position="326"/>
    </location>
</feature>
<feature type="glycosylation site" description="N-linked (GlcNAc...) asparagine" evidence="2">
    <location>
        <position position="175"/>
    </location>
</feature>
<feature type="disulfide bond" evidence="3">
    <location>
        <begin position="101"/>
        <end position="188"/>
    </location>
</feature>
<feature type="sequence conflict" description="In Ref. 1; AAC52284." evidence="5" ref="1">
    <location>
        <begin position="1"/>
        <end position="15"/>
    </location>
</feature>
<feature type="sequence conflict" description="In Ref. 1; AAC52284." evidence="5" ref="1">
    <original>N</original>
    <variation>T</variation>
    <location>
        <position position="28"/>
    </location>
</feature>
<feature type="sequence conflict" description="In Ref. 1; AAC52284." evidence="5" ref="1">
    <original>F</original>
    <variation>S</variation>
    <location>
        <position position="34"/>
    </location>
</feature>
<feature type="sequence conflict" description="In Ref. 1; AAC52284." evidence="5" ref="1">
    <original>V</original>
    <variation>E</variation>
    <location>
        <position position="224"/>
    </location>
</feature>
<feature type="sequence conflict" description="In Ref. 1; AAC52284." evidence="5" ref="1">
    <original>Y</original>
    <variation>D</variation>
    <location>
        <position position="295"/>
    </location>
</feature>
<feature type="sequence conflict" description="In Ref. 1; AAC52284." evidence="5" ref="1">
    <original>E</original>
    <variation>G</variation>
    <location>
        <position position="309"/>
    </location>
</feature>
<reference evidence="5 6" key="1">
    <citation type="journal article" date="1995" name="Cell">
        <title>A novel family of genes encoding putative pheromone receptors in mammals.</title>
        <authorList>
            <person name="Dulac C."/>
            <person name="Axel R."/>
        </authorList>
    </citation>
    <scope>NUCLEOTIDE SEQUENCE [MRNA]</scope>
    <scope>PUTATIVE FUNCTION</scope>
    <scope>TISSUE SPECIFICITY</scope>
    <source>
        <strain evidence="6">Sprague-Dawley</strain>
        <tissue evidence="6">Vomeronasal organ</tissue>
    </source>
</reference>
<reference evidence="7" key="2">
    <citation type="submission" date="2003-12" db="EMBL/GenBank/DDBJ databases">
        <title>Rat vomeronasal receptors.</title>
        <authorList>
            <person name="Capello L."/>
            <person name="Rodriguez I."/>
        </authorList>
    </citation>
    <scope>NUCLEOTIDE SEQUENCE [MRNA]</scope>
</reference>
<organism>
    <name type="scientific">Rattus norvegicus</name>
    <name type="common">Rat</name>
    <dbReference type="NCBI Taxonomy" id="10116"/>
    <lineage>
        <taxon>Eukaryota</taxon>
        <taxon>Metazoa</taxon>
        <taxon>Chordata</taxon>
        <taxon>Craniata</taxon>
        <taxon>Vertebrata</taxon>
        <taxon>Euteleostomi</taxon>
        <taxon>Mammalia</taxon>
        <taxon>Eutheria</taxon>
        <taxon>Euarchontoglires</taxon>
        <taxon>Glires</taxon>
        <taxon>Rodentia</taxon>
        <taxon>Myomorpha</taxon>
        <taxon>Muroidea</taxon>
        <taxon>Muridae</taxon>
        <taxon>Murinae</taxon>
        <taxon>Rattus</taxon>
    </lineage>
</organism>
<evidence type="ECO:0000250" key="1">
    <source>
        <dbReference type="UniProtKB" id="Q8VIC6"/>
    </source>
</evidence>
<evidence type="ECO:0000255" key="2"/>
<evidence type="ECO:0000255" key="3">
    <source>
        <dbReference type="PROSITE-ProRule" id="PRU00521"/>
    </source>
</evidence>
<evidence type="ECO:0000269" key="4">
    <source>
    </source>
</evidence>
<evidence type="ECO:0000305" key="5"/>
<evidence type="ECO:0000312" key="6">
    <source>
        <dbReference type="EMBL" id="AAC52284.1"/>
    </source>
</evidence>
<evidence type="ECO:0000312" key="7">
    <source>
        <dbReference type="EMBL" id="AAR87961.1"/>
    </source>
</evidence>
<keyword id="KW-1003">Cell membrane</keyword>
<keyword id="KW-1015">Disulfide bond</keyword>
<keyword id="KW-0297">G-protein coupled receptor</keyword>
<keyword id="KW-0325">Glycoprotein</keyword>
<keyword id="KW-0472">Membrane</keyword>
<keyword id="KW-0589">Pheromone response</keyword>
<keyword id="KW-0675">Receptor</keyword>
<keyword id="KW-1185">Reference proteome</keyword>
<keyword id="KW-0807">Transducer</keyword>
<keyword id="KW-0812">Transmembrane</keyword>
<keyword id="KW-1133">Transmembrane helix</keyword>
<dbReference type="EMBL" id="U36895">
    <property type="protein sequence ID" value="AAC52284.1"/>
    <property type="molecule type" value="mRNA"/>
</dbReference>
<dbReference type="EMBL" id="AY510294">
    <property type="protein sequence ID" value="AAR87961.1"/>
    <property type="molecule type" value="mRNA"/>
</dbReference>
<dbReference type="PIR" id="A57223">
    <property type="entry name" value="A57223"/>
</dbReference>
<dbReference type="RefSeq" id="NP_775418.1">
    <property type="nucleotide sequence ID" value="NM_173296.1"/>
</dbReference>
<dbReference type="SMR" id="Q5J3L6"/>
<dbReference type="GlyCosmos" id="Q5J3L6">
    <property type="glycosylation" value="1 site, No reported glycans"/>
</dbReference>
<dbReference type="GlyGen" id="Q5J3L6">
    <property type="glycosylation" value="1 site"/>
</dbReference>
<dbReference type="PaxDb" id="10116-ENSRNOP00000023885"/>
<dbReference type="Ensembl" id="ENSRNOT00000099837.1">
    <property type="protein sequence ID" value="ENSRNOP00000095102.1"/>
    <property type="gene ID" value="ENSRNOG00000064314.1"/>
</dbReference>
<dbReference type="GeneID" id="297439"/>
<dbReference type="KEGG" id="rno:297439"/>
<dbReference type="UCSC" id="RGD:1549727">
    <property type="organism name" value="rat"/>
</dbReference>
<dbReference type="AGR" id="RGD:1549727"/>
<dbReference type="CTD" id="297439"/>
<dbReference type="RGD" id="1549727">
    <property type="gene designation" value="Vom1r100"/>
</dbReference>
<dbReference type="eggNOG" id="ENOG502SNRJ">
    <property type="taxonomic scope" value="Eukaryota"/>
</dbReference>
<dbReference type="GeneTree" id="ENSGT01030000234553"/>
<dbReference type="InParanoid" id="Q5J3L6"/>
<dbReference type="OMA" id="TCKFLIY"/>
<dbReference type="OrthoDB" id="9620038at2759"/>
<dbReference type="PhylomeDB" id="Q5J3L6"/>
<dbReference type="PRO" id="PR:Q5J3L6"/>
<dbReference type="Proteomes" id="UP000002494">
    <property type="component" value="Chromosome 4"/>
</dbReference>
<dbReference type="GO" id="GO:0005886">
    <property type="term" value="C:plasma membrane"/>
    <property type="evidence" value="ECO:0007669"/>
    <property type="project" value="UniProtKB-SubCell"/>
</dbReference>
<dbReference type="GO" id="GO:0016503">
    <property type="term" value="F:pheromone receptor activity"/>
    <property type="evidence" value="ECO:0007669"/>
    <property type="project" value="InterPro"/>
</dbReference>
<dbReference type="GO" id="GO:0019236">
    <property type="term" value="P:response to pheromone"/>
    <property type="evidence" value="ECO:0007669"/>
    <property type="project" value="UniProtKB-KW"/>
</dbReference>
<dbReference type="GO" id="GO:0007606">
    <property type="term" value="P:sensory perception of chemical stimulus"/>
    <property type="evidence" value="ECO:0007669"/>
    <property type="project" value="UniProtKB-ARBA"/>
</dbReference>
<dbReference type="CDD" id="cd13949">
    <property type="entry name" value="7tm_V1R_pheromone"/>
    <property type="match status" value="1"/>
</dbReference>
<dbReference type="FunFam" id="1.20.1070.10:FF:000051">
    <property type="entry name" value="Vomeronasal type-1 receptor"/>
    <property type="match status" value="1"/>
</dbReference>
<dbReference type="Gene3D" id="1.20.1070.10">
    <property type="entry name" value="Rhodopsin 7-helix transmembrane proteins"/>
    <property type="match status" value="1"/>
</dbReference>
<dbReference type="InterPro" id="IPR017452">
    <property type="entry name" value="GPCR_Rhodpsn_7TM"/>
</dbReference>
<dbReference type="InterPro" id="IPR004072">
    <property type="entry name" value="Vmron_rcpt_1"/>
</dbReference>
<dbReference type="PANTHER" id="PTHR24062">
    <property type="entry name" value="VOMERONASAL TYPE-1 RECEPTOR"/>
    <property type="match status" value="1"/>
</dbReference>
<dbReference type="Pfam" id="PF03402">
    <property type="entry name" value="V1R"/>
    <property type="match status" value="1"/>
</dbReference>
<dbReference type="PRINTS" id="PR01534">
    <property type="entry name" value="VOMERONASL1R"/>
</dbReference>
<dbReference type="SUPFAM" id="SSF81321">
    <property type="entry name" value="Family A G protein-coupled receptor-like"/>
    <property type="match status" value="1"/>
</dbReference>
<dbReference type="PROSITE" id="PS50262">
    <property type="entry name" value="G_PROTEIN_RECEP_F1_2"/>
    <property type="match status" value="1"/>
</dbReference>
<name>VR100_RAT</name>